<evidence type="ECO:0000250" key="1"/>
<evidence type="ECO:0000255" key="2">
    <source>
        <dbReference type="HAMAP-Rule" id="MF_00103"/>
    </source>
</evidence>
<protein>
    <recommendedName>
        <fullName evidence="2">Formamidopyrimidine-DNA glycosylase</fullName>
        <shortName evidence="2">Fapy-DNA glycosylase</shortName>
        <ecNumber evidence="2">3.2.2.23</ecNumber>
    </recommendedName>
    <alternativeName>
        <fullName evidence="2">DNA-(apurinic or apyrimidinic site) lyase MutM</fullName>
        <shortName evidence="2">AP lyase MutM</shortName>
        <ecNumber evidence="2">4.2.99.18</ecNumber>
    </alternativeName>
</protein>
<proteinExistence type="inferred from homology"/>
<gene>
    <name evidence="2" type="primary">mutM</name>
    <name evidence="2" type="synonym">fpg</name>
    <name type="ordered locus">blr0762</name>
</gene>
<keyword id="KW-0227">DNA damage</keyword>
<keyword id="KW-0234">DNA repair</keyword>
<keyword id="KW-0238">DNA-binding</keyword>
<keyword id="KW-0326">Glycosidase</keyword>
<keyword id="KW-0378">Hydrolase</keyword>
<keyword id="KW-0456">Lyase</keyword>
<keyword id="KW-0479">Metal-binding</keyword>
<keyword id="KW-0511">Multifunctional enzyme</keyword>
<keyword id="KW-1185">Reference proteome</keyword>
<keyword id="KW-0862">Zinc</keyword>
<keyword id="KW-0863">Zinc-finger</keyword>
<dbReference type="EC" id="3.2.2.23" evidence="2"/>
<dbReference type="EC" id="4.2.99.18" evidence="2"/>
<dbReference type="EMBL" id="BA000040">
    <property type="protein sequence ID" value="BAC46027.1"/>
    <property type="molecule type" value="Genomic_DNA"/>
</dbReference>
<dbReference type="RefSeq" id="NP_767402.1">
    <property type="nucleotide sequence ID" value="NC_004463.1"/>
</dbReference>
<dbReference type="RefSeq" id="WP_011083585.1">
    <property type="nucleotide sequence ID" value="NC_004463.1"/>
</dbReference>
<dbReference type="SMR" id="Q89WC9"/>
<dbReference type="FunCoup" id="Q89WC9">
    <property type="interactions" value="570"/>
</dbReference>
<dbReference type="STRING" id="224911.AAV28_00660"/>
<dbReference type="EnsemblBacteria" id="BAC46027">
    <property type="protein sequence ID" value="BAC46027"/>
    <property type="gene ID" value="BAC46027"/>
</dbReference>
<dbReference type="GeneID" id="46488038"/>
<dbReference type="KEGG" id="bja:blr0762"/>
<dbReference type="PATRIC" id="fig|224911.44.peg.136"/>
<dbReference type="eggNOG" id="COG0266">
    <property type="taxonomic scope" value="Bacteria"/>
</dbReference>
<dbReference type="HOGENOM" id="CLU_038423_1_1_5"/>
<dbReference type="InParanoid" id="Q89WC9"/>
<dbReference type="OrthoDB" id="9800855at2"/>
<dbReference type="PhylomeDB" id="Q89WC9"/>
<dbReference type="Proteomes" id="UP000002526">
    <property type="component" value="Chromosome"/>
</dbReference>
<dbReference type="GO" id="GO:0034039">
    <property type="term" value="F:8-oxo-7,8-dihydroguanine DNA N-glycosylase activity"/>
    <property type="evidence" value="ECO:0000318"/>
    <property type="project" value="GO_Central"/>
</dbReference>
<dbReference type="GO" id="GO:0140078">
    <property type="term" value="F:class I DNA-(apurinic or apyrimidinic site) endonuclease activity"/>
    <property type="evidence" value="ECO:0007669"/>
    <property type="project" value="UniProtKB-EC"/>
</dbReference>
<dbReference type="GO" id="GO:0003684">
    <property type="term" value="F:damaged DNA binding"/>
    <property type="evidence" value="ECO:0007669"/>
    <property type="project" value="InterPro"/>
</dbReference>
<dbReference type="GO" id="GO:0003906">
    <property type="term" value="F:DNA-(apurinic or apyrimidinic site) endonuclease activity"/>
    <property type="evidence" value="ECO:0000318"/>
    <property type="project" value="GO_Central"/>
</dbReference>
<dbReference type="GO" id="GO:0008270">
    <property type="term" value="F:zinc ion binding"/>
    <property type="evidence" value="ECO:0007669"/>
    <property type="project" value="UniProtKB-UniRule"/>
</dbReference>
<dbReference type="GO" id="GO:0006284">
    <property type="term" value="P:base-excision repair"/>
    <property type="evidence" value="ECO:0000318"/>
    <property type="project" value="GO_Central"/>
</dbReference>
<dbReference type="CDD" id="cd08966">
    <property type="entry name" value="EcFpg-like_N"/>
    <property type="match status" value="1"/>
</dbReference>
<dbReference type="FunFam" id="1.10.8.50:FF:000003">
    <property type="entry name" value="Formamidopyrimidine-DNA glycosylase"/>
    <property type="match status" value="1"/>
</dbReference>
<dbReference type="FunFam" id="3.20.190.10:FF:000001">
    <property type="entry name" value="Formamidopyrimidine-DNA glycosylase"/>
    <property type="match status" value="1"/>
</dbReference>
<dbReference type="Gene3D" id="1.10.8.50">
    <property type="match status" value="1"/>
</dbReference>
<dbReference type="Gene3D" id="3.20.190.10">
    <property type="entry name" value="MutM-like, N-terminal"/>
    <property type="match status" value="1"/>
</dbReference>
<dbReference type="HAMAP" id="MF_00103">
    <property type="entry name" value="Fapy_DNA_glycosyl"/>
    <property type="match status" value="1"/>
</dbReference>
<dbReference type="InterPro" id="IPR015886">
    <property type="entry name" value="DNA_glyclase/AP_lyase_DNA-bd"/>
</dbReference>
<dbReference type="InterPro" id="IPR015887">
    <property type="entry name" value="DNA_glyclase_Znf_dom_DNA_BS"/>
</dbReference>
<dbReference type="InterPro" id="IPR020629">
    <property type="entry name" value="Formamido-pyr_DNA_Glyclase"/>
</dbReference>
<dbReference type="InterPro" id="IPR012319">
    <property type="entry name" value="FPG_cat"/>
</dbReference>
<dbReference type="InterPro" id="IPR035937">
    <property type="entry name" value="MutM-like_N-ter"/>
</dbReference>
<dbReference type="InterPro" id="IPR010979">
    <property type="entry name" value="Ribosomal_uS13-like_H2TH"/>
</dbReference>
<dbReference type="InterPro" id="IPR000214">
    <property type="entry name" value="Znf_DNA_glyclase/AP_lyase"/>
</dbReference>
<dbReference type="InterPro" id="IPR010663">
    <property type="entry name" value="Znf_FPG/IleRS"/>
</dbReference>
<dbReference type="NCBIfam" id="TIGR00577">
    <property type="entry name" value="fpg"/>
    <property type="match status" value="1"/>
</dbReference>
<dbReference type="NCBIfam" id="NF002211">
    <property type="entry name" value="PRK01103.1"/>
    <property type="match status" value="1"/>
</dbReference>
<dbReference type="PANTHER" id="PTHR22993">
    <property type="entry name" value="FORMAMIDOPYRIMIDINE-DNA GLYCOSYLASE"/>
    <property type="match status" value="1"/>
</dbReference>
<dbReference type="PANTHER" id="PTHR22993:SF9">
    <property type="entry name" value="FORMAMIDOPYRIMIDINE-DNA GLYCOSYLASE"/>
    <property type="match status" value="1"/>
</dbReference>
<dbReference type="Pfam" id="PF01149">
    <property type="entry name" value="Fapy_DNA_glyco"/>
    <property type="match status" value="1"/>
</dbReference>
<dbReference type="Pfam" id="PF06831">
    <property type="entry name" value="H2TH"/>
    <property type="match status" value="1"/>
</dbReference>
<dbReference type="Pfam" id="PF06827">
    <property type="entry name" value="zf-FPG_IleRS"/>
    <property type="match status" value="1"/>
</dbReference>
<dbReference type="SMART" id="SM00898">
    <property type="entry name" value="Fapy_DNA_glyco"/>
    <property type="match status" value="1"/>
</dbReference>
<dbReference type="SMART" id="SM01232">
    <property type="entry name" value="H2TH"/>
    <property type="match status" value="1"/>
</dbReference>
<dbReference type="SUPFAM" id="SSF57716">
    <property type="entry name" value="Glucocorticoid receptor-like (DNA-binding domain)"/>
    <property type="match status" value="1"/>
</dbReference>
<dbReference type="SUPFAM" id="SSF81624">
    <property type="entry name" value="N-terminal domain of MutM-like DNA repair proteins"/>
    <property type="match status" value="1"/>
</dbReference>
<dbReference type="SUPFAM" id="SSF46946">
    <property type="entry name" value="S13-like H2TH domain"/>
    <property type="match status" value="1"/>
</dbReference>
<dbReference type="PROSITE" id="PS51068">
    <property type="entry name" value="FPG_CAT"/>
    <property type="match status" value="1"/>
</dbReference>
<dbReference type="PROSITE" id="PS01242">
    <property type="entry name" value="ZF_FPG_1"/>
    <property type="match status" value="1"/>
</dbReference>
<dbReference type="PROSITE" id="PS51066">
    <property type="entry name" value="ZF_FPG_2"/>
    <property type="match status" value="1"/>
</dbReference>
<name>FPG_BRADU</name>
<sequence>MPELPEVETVRRGLQPVMEGAKIVVAEARRPDLRFPFQPDFVARLQGQVVTGLGRRAKYLMADLASGDVLLMHLGMSGSFRVIKPDNDAAPGEFHYPRGKDTTHDHVLFRMSSGADIVFNDPRRFGYMKVIARNALEDEPLLRGLGPEPLGNEFDAAMLARSCEGKATSLKAALLDQRVVAGLGNIYVCEALHRSHLSPRRIAATLATRKGEPTDHAKRLVGAIHTVLNDAIKAGGSSLRDHRQTTGELGYFQHSFKVYDREGETCKTPACGGTIKRFTQNGRSTFWCPKCQK</sequence>
<organism>
    <name type="scientific">Bradyrhizobium diazoefficiens (strain JCM 10833 / BCRC 13528 / IAM 13628 / NBRC 14792 / USDA 110)</name>
    <dbReference type="NCBI Taxonomy" id="224911"/>
    <lineage>
        <taxon>Bacteria</taxon>
        <taxon>Pseudomonadati</taxon>
        <taxon>Pseudomonadota</taxon>
        <taxon>Alphaproteobacteria</taxon>
        <taxon>Hyphomicrobiales</taxon>
        <taxon>Nitrobacteraceae</taxon>
        <taxon>Bradyrhizobium</taxon>
    </lineage>
</organism>
<comment type="function">
    <text evidence="2">Involved in base excision repair of DNA damaged by oxidation or by mutagenic agents. Acts as a DNA glycosylase that recognizes and removes damaged bases. Has a preference for oxidized purines, such as 7,8-dihydro-8-oxoguanine (8-oxoG). Has AP (apurinic/apyrimidinic) lyase activity and introduces nicks in the DNA strand. Cleaves the DNA backbone by beta-delta elimination to generate a single-strand break at the site of the removed base with both 3'- and 5'-phosphates.</text>
</comment>
<comment type="catalytic activity">
    <reaction evidence="2">
        <text>Hydrolysis of DNA containing ring-opened 7-methylguanine residues, releasing 2,6-diamino-4-hydroxy-5-(N-methyl)formamidopyrimidine.</text>
        <dbReference type="EC" id="3.2.2.23"/>
    </reaction>
</comment>
<comment type="catalytic activity">
    <reaction evidence="2">
        <text>2'-deoxyribonucleotide-(2'-deoxyribose 5'-phosphate)-2'-deoxyribonucleotide-DNA = a 3'-end 2'-deoxyribonucleotide-(2,3-dehydro-2,3-deoxyribose 5'-phosphate)-DNA + a 5'-end 5'-phospho-2'-deoxyribonucleoside-DNA + H(+)</text>
        <dbReference type="Rhea" id="RHEA:66592"/>
        <dbReference type="Rhea" id="RHEA-COMP:13180"/>
        <dbReference type="Rhea" id="RHEA-COMP:16897"/>
        <dbReference type="Rhea" id="RHEA-COMP:17067"/>
        <dbReference type="ChEBI" id="CHEBI:15378"/>
        <dbReference type="ChEBI" id="CHEBI:136412"/>
        <dbReference type="ChEBI" id="CHEBI:157695"/>
        <dbReference type="ChEBI" id="CHEBI:167181"/>
        <dbReference type="EC" id="4.2.99.18"/>
    </reaction>
</comment>
<comment type="cofactor">
    <cofactor evidence="2">
        <name>Zn(2+)</name>
        <dbReference type="ChEBI" id="CHEBI:29105"/>
    </cofactor>
    <text evidence="2">Binds 1 zinc ion per subunit.</text>
</comment>
<comment type="subunit">
    <text evidence="2">Monomer.</text>
</comment>
<comment type="similarity">
    <text evidence="2">Belongs to the FPG family.</text>
</comment>
<accession>Q89WC9</accession>
<reference key="1">
    <citation type="journal article" date="2002" name="DNA Res.">
        <title>Complete genomic sequence of nitrogen-fixing symbiotic bacterium Bradyrhizobium japonicum USDA110.</title>
        <authorList>
            <person name="Kaneko T."/>
            <person name="Nakamura Y."/>
            <person name="Sato S."/>
            <person name="Minamisawa K."/>
            <person name="Uchiumi T."/>
            <person name="Sasamoto S."/>
            <person name="Watanabe A."/>
            <person name="Idesawa K."/>
            <person name="Iriguchi M."/>
            <person name="Kawashima K."/>
            <person name="Kohara M."/>
            <person name="Matsumoto M."/>
            <person name="Shimpo S."/>
            <person name="Tsuruoka H."/>
            <person name="Wada T."/>
            <person name="Yamada M."/>
            <person name="Tabata S."/>
        </authorList>
    </citation>
    <scope>NUCLEOTIDE SEQUENCE [LARGE SCALE GENOMIC DNA]</scope>
    <source>
        <strain>JCM 10833 / BCRC 13528 / IAM 13628 / NBRC 14792 / USDA 110</strain>
    </source>
</reference>
<feature type="initiator methionine" description="Removed" evidence="1">
    <location>
        <position position="1"/>
    </location>
</feature>
<feature type="chain" id="PRO_0000170814" description="Formamidopyrimidine-DNA glycosylase">
    <location>
        <begin position="2"/>
        <end position="293"/>
    </location>
</feature>
<feature type="zinc finger region" description="FPG-type" evidence="2">
    <location>
        <begin position="257"/>
        <end position="293"/>
    </location>
</feature>
<feature type="active site" description="Schiff-base intermediate with DNA" evidence="2">
    <location>
        <position position="2"/>
    </location>
</feature>
<feature type="active site" description="Proton donor" evidence="2">
    <location>
        <position position="3"/>
    </location>
</feature>
<feature type="active site" description="Proton donor; for beta-elimination activity" evidence="2">
    <location>
        <position position="58"/>
    </location>
</feature>
<feature type="active site" description="Proton donor; for delta-elimination activity" evidence="2">
    <location>
        <position position="283"/>
    </location>
</feature>
<feature type="binding site" evidence="2">
    <location>
        <position position="104"/>
    </location>
    <ligand>
        <name>DNA</name>
        <dbReference type="ChEBI" id="CHEBI:16991"/>
    </ligand>
</feature>
<feature type="binding site" evidence="2">
    <location>
        <position position="123"/>
    </location>
    <ligand>
        <name>DNA</name>
        <dbReference type="ChEBI" id="CHEBI:16991"/>
    </ligand>
</feature>
<feature type="binding site" evidence="2">
    <location>
        <position position="166"/>
    </location>
    <ligand>
        <name>DNA</name>
        <dbReference type="ChEBI" id="CHEBI:16991"/>
    </ligand>
</feature>